<protein>
    <recommendedName>
        <fullName evidence="1">Aspartyl/glutamyl-tRNA(Asn/Gln) amidotransferase subunit C</fullName>
        <shortName evidence="1">Asp/Glu-ADT subunit C</shortName>
        <ecNumber evidence="1">6.3.5.-</ecNumber>
    </recommendedName>
</protein>
<reference key="1">
    <citation type="journal article" date="2009" name="Proc. Natl. Acad. Sci. U.S.A.">
        <title>Biogeography of the Sulfolobus islandicus pan-genome.</title>
        <authorList>
            <person name="Reno M.L."/>
            <person name="Held N.L."/>
            <person name="Fields C.J."/>
            <person name="Burke P.V."/>
            <person name="Whitaker R.J."/>
        </authorList>
    </citation>
    <scope>NUCLEOTIDE SEQUENCE [LARGE SCALE GENOMIC DNA]</scope>
    <source>
        <strain>Y.N.15.51 / Yellowstone #2</strain>
    </source>
</reference>
<feature type="chain" id="PRO_1000203084" description="Aspartyl/glutamyl-tRNA(Asn/Gln) amidotransferase subunit C">
    <location>
        <begin position="1"/>
        <end position="97"/>
    </location>
</feature>
<feature type="region of interest" description="Disordered" evidence="2">
    <location>
        <begin position="58"/>
        <end position="78"/>
    </location>
</feature>
<feature type="compositionally biased region" description="Basic and acidic residues" evidence="2">
    <location>
        <begin position="63"/>
        <end position="77"/>
    </location>
</feature>
<gene>
    <name evidence="1" type="primary">gatC</name>
    <name type="ordered locus">YN1551_1595</name>
</gene>
<organism>
    <name type="scientific">Saccharolobus islandicus (strain Y.N.15.51 / Yellowstone #2)</name>
    <name type="common">Sulfolobus islandicus</name>
    <dbReference type="NCBI Taxonomy" id="419942"/>
    <lineage>
        <taxon>Archaea</taxon>
        <taxon>Thermoproteota</taxon>
        <taxon>Thermoprotei</taxon>
        <taxon>Sulfolobales</taxon>
        <taxon>Sulfolobaceae</taxon>
        <taxon>Saccharolobus</taxon>
    </lineage>
</organism>
<sequence length="97" mass="11396">MKIEVNKNLIKHLENLSLIQLSQNEEKMLENDITNIIKFFEKINELDLSNVEPLFHPLPQGRLRKDTPRDPLDRENALKNVKRKENGYIVGPRTYGE</sequence>
<comment type="function">
    <text evidence="1">Allows the formation of correctly charged Asn-tRNA(Asn) or Gln-tRNA(Gln) through the transamidation of misacylated Asp-tRNA(Asn) or Glu-tRNA(Gln) in organisms which lack either or both of asparaginyl-tRNA or glutaminyl-tRNA synthetases. The reaction takes place in the presence of glutamine and ATP through an activated phospho-Asp-tRNA(Asn) or phospho-Glu-tRNA(Gln).</text>
</comment>
<comment type="catalytic activity">
    <reaction evidence="1">
        <text>L-glutamyl-tRNA(Gln) + L-glutamine + ATP + H2O = L-glutaminyl-tRNA(Gln) + L-glutamate + ADP + phosphate + H(+)</text>
        <dbReference type="Rhea" id="RHEA:17521"/>
        <dbReference type="Rhea" id="RHEA-COMP:9681"/>
        <dbReference type="Rhea" id="RHEA-COMP:9684"/>
        <dbReference type="ChEBI" id="CHEBI:15377"/>
        <dbReference type="ChEBI" id="CHEBI:15378"/>
        <dbReference type="ChEBI" id="CHEBI:29985"/>
        <dbReference type="ChEBI" id="CHEBI:30616"/>
        <dbReference type="ChEBI" id="CHEBI:43474"/>
        <dbReference type="ChEBI" id="CHEBI:58359"/>
        <dbReference type="ChEBI" id="CHEBI:78520"/>
        <dbReference type="ChEBI" id="CHEBI:78521"/>
        <dbReference type="ChEBI" id="CHEBI:456216"/>
    </reaction>
</comment>
<comment type="catalytic activity">
    <reaction evidence="1">
        <text>L-aspartyl-tRNA(Asn) + L-glutamine + ATP + H2O = L-asparaginyl-tRNA(Asn) + L-glutamate + ADP + phosphate + 2 H(+)</text>
        <dbReference type="Rhea" id="RHEA:14513"/>
        <dbReference type="Rhea" id="RHEA-COMP:9674"/>
        <dbReference type="Rhea" id="RHEA-COMP:9677"/>
        <dbReference type="ChEBI" id="CHEBI:15377"/>
        <dbReference type="ChEBI" id="CHEBI:15378"/>
        <dbReference type="ChEBI" id="CHEBI:29985"/>
        <dbReference type="ChEBI" id="CHEBI:30616"/>
        <dbReference type="ChEBI" id="CHEBI:43474"/>
        <dbReference type="ChEBI" id="CHEBI:58359"/>
        <dbReference type="ChEBI" id="CHEBI:78515"/>
        <dbReference type="ChEBI" id="CHEBI:78516"/>
        <dbReference type="ChEBI" id="CHEBI:456216"/>
    </reaction>
</comment>
<comment type="subunit">
    <text evidence="1">Heterotrimer of A, B and C subunits.</text>
</comment>
<comment type="similarity">
    <text evidence="1">Belongs to the GatC family.</text>
</comment>
<accession>C3NHS3</accession>
<dbReference type="EC" id="6.3.5.-" evidence="1"/>
<dbReference type="EMBL" id="CP001404">
    <property type="protein sequence ID" value="ACP48683.1"/>
    <property type="molecule type" value="Genomic_DNA"/>
</dbReference>
<dbReference type="RefSeq" id="WP_012711275.1">
    <property type="nucleotide sequence ID" value="NC_012623.1"/>
</dbReference>
<dbReference type="SMR" id="C3NHS3"/>
<dbReference type="GeneID" id="84061583"/>
<dbReference type="KEGG" id="sin:YN1551_1595"/>
<dbReference type="HOGENOM" id="CLU_105899_4_1_2"/>
<dbReference type="Proteomes" id="UP000006818">
    <property type="component" value="Chromosome"/>
</dbReference>
<dbReference type="GO" id="GO:0050566">
    <property type="term" value="F:asparaginyl-tRNA synthase (glutamine-hydrolyzing) activity"/>
    <property type="evidence" value="ECO:0007669"/>
    <property type="project" value="RHEA"/>
</dbReference>
<dbReference type="GO" id="GO:0005524">
    <property type="term" value="F:ATP binding"/>
    <property type="evidence" value="ECO:0007669"/>
    <property type="project" value="UniProtKB-KW"/>
</dbReference>
<dbReference type="GO" id="GO:0050567">
    <property type="term" value="F:glutaminyl-tRNA synthase (glutamine-hydrolyzing) activity"/>
    <property type="evidence" value="ECO:0007669"/>
    <property type="project" value="UniProtKB-UniRule"/>
</dbReference>
<dbReference type="GO" id="GO:0070681">
    <property type="term" value="P:glutaminyl-tRNAGln biosynthesis via transamidation"/>
    <property type="evidence" value="ECO:0007669"/>
    <property type="project" value="TreeGrafter"/>
</dbReference>
<dbReference type="GO" id="GO:0006450">
    <property type="term" value="P:regulation of translational fidelity"/>
    <property type="evidence" value="ECO:0007669"/>
    <property type="project" value="InterPro"/>
</dbReference>
<dbReference type="GO" id="GO:0006412">
    <property type="term" value="P:translation"/>
    <property type="evidence" value="ECO:0007669"/>
    <property type="project" value="UniProtKB-UniRule"/>
</dbReference>
<dbReference type="Gene3D" id="1.10.20.60">
    <property type="entry name" value="Glu-tRNAGln amidotransferase C subunit, N-terminal domain"/>
    <property type="match status" value="1"/>
</dbReference>
<dbReference type="HAMAP" id="MF_00122">
    <property type="entry name" value="GatC"/>
    <property type="match status" value="1"/>
</dbReference>
<dbReference type="InterPro" id="IPR036113">
    <property type="entry name" value="Asp/Glu-ADT_sf_sub_c"/>
</dbReference>
<dbReference type="InterPro" id="IPR003837">
    <property type="entry name" value="GatC"/>
</dbReference>
<dbReference type="NCBIfam" id="TIGR00135">
    <property type="entry name" value="gatC"/>
    <property type="match status" value="1"/>
</dbReference>
<dbReference type="NCBIfam" id="NF000684">
    <property type="entry name" value="PRK00034.3-4"/>
    <property type="match status" value="1"/>
</dbReference>
<dbReference type="PANTHER" id="PTHR15004">
    <property type="entry name" value="GLUTAMYL-TRNA(GLN) AMIDOTRANSFERASE SUBUNIT C, MITOCHONDRIAL"/>
    <property type="match status" value="1"/>
</dbReference>
<dbReference type="PANTHER" id="PTHR15004:SF0">
    <property type="entry name" value="GLUTAMYL-TRNA(GLN) AMIDOTRANSFERASE SUBUNIT C, MITOCHONDRIAL"/>
    <property type="match status" value="1"/>
</dbReference>
<dbReference type="Pfam" id="PF02686">
    <property type="entry name" value="GatC"/>
    <property type="match status" value="1"/>
</dbReference>
<dbReference type="SUPFAM" id="SSF141000">
    <property type="entry name" value="Glu-tRNAGln amidotransferase C subunit"/>
    <property type="match status" value="1"/>
</dbReference>
<proteinExistence type="inferred from homology"/>
<keyword id="KW-0067">ATP-binding</keyword>
<keyword id="KW-0436">Ligase</keyword>
<keyword id="KW-0547">Nucleotide-binding</keyword>
<keyword id="KW-0648">Protein biosynthesis</keyword>
<name>GATC_SACI1</name>
<evidence type="ECO:0000255" key="1">
    <source>
        <dbReference type="HAMAP-Rule" id="MF_00122"/>
    </source>
</evidence>
<evidence type="ECO:0000256" key="2">
    <source>
        <dbReference type="SAM" id="MobiDB-lite"/>
    </source>
</evidence>